<sequence>MARPRTRSVARMEATAAAAAAAEEEEAGNPDGAEGAAVVAVAPEAAAEGPNEPNAGEASREPDAGQASREPDVAGPSRQPGAAGPSREPGAAGGPRQPGAAGGPWQLVPNAAGPAVAPYVEDIDRYLRSLEGREMAKCLDAVQFCTAEESRRPIVNYDQEIQGGHINMRGKLVNWMEELVYGFNLWDNILYLAVSYVDRFLSRNVVNRERLQLLGTSALFVASKYEDRCHPSARFFSSITADTYTTQQVVAMEANILSFLNFQMGSPTVITFLRRFLFSCRGSNRPINIRLELMCIYLAELSLLDDYNIRFLPSIVAAACLFVGKFTLNPNTRPWNLSVQRITGYKVSDIEDCIRSIHDLQAGRKWSNLRAIRSKYEDDAFERVSTIPSPNTIKPSFLRDLKYVNG</sequence>
<accession>Q10Q62</accession>
<proteinExistence type="inferred from homology"/>
<name>CCF32_ORYSJ</name>
<dbReference type="EMBL" id="DP000009">
    <property type="protein sequence ID" value="ABF94570.1"/>
    <property type="molecule type" value="Genomic_DNA"/>
</dbReference>
<dbReference type="EMBL" id="AP008209">
    <property type="status" value="NOT_ANNOTATED_CDS"/>
    <property type="molecule type" value="Genomic_DNA"/>
</dbReference>
<dbReference type="EMBL" id="AP014959">
    <property type="status" value="NOT_ANNOTATED_CDS"/>
    <property type="molecule type" value="Genomic_DNA"/>
</dbReference>
<dbReference type="EMBL" id="CM000140">
    <property type="status" value="NOT_ANNOTATED_CDS"/>
    <property type="molecule type" value="Genomic_DNA"/>
</dbReference>
<dbReference type="SMR" id="Q10Q62"/>
<dbReference type="FunCoup" id="Q10Q62">
    <property type="interactions" value="356"/>
</dbReference>
<dbReference type="STRING" id="39947.Q10Q62"/>
<dbReference type="PaxDb" id="39947-Q10Q62"/>
<dbReference type="eggNOG" id="KOG0654">
    <property type="taxonomic scope" value="Eukaryota"/>
</dbReference>
<dbReference type="HOGENOM" id="CLU_020695_2_2_1"/>
<dbReference type="InParanoid" id="Q10Q62"/>
<dbReference type="Proteomes" id="UP000000763">
    <property type="component" value="Chromosome 3"/>
</dbReference>
<dbReference type="Proteomes" id="UP000007752">
    <property type="component" value="Chromosome 3"/>
</dbReference>
<dbReference type="Proteomes" id="UP000059680">
    <property type="component" value="Chromosome 3"/>
</dbReference>
<dbReference type="GO" id="GO:0000307">
    <property type="term" value="C:cyclin-dependent protein kinase holoenzyme complex"/>
    <property type="evidence" value="ECO:0000318"/>
    <property type="project" value="GO_Central"/>
</dbReference>
<dbReference type="GO" id="GO:0005737">
    <property type="term" value="C:cytoplasm"/>
    <property type="evidence" value="ECO:0000318"/>
    <property type="project" value="GO_Central"/>
</dbReference>
<dbReference type="GO" id="GO:0005634">
    <property type="term" value="C:nucleus"/>
    <property type="evidence" value="ECO:0000318"/>
    <property type="project" value="GO_Central"/>
</dbReference>
<dbReference type="GO" id="GO:0016538">
    <property type="term" value="F:cyclin-dependent protein serine/threonine kinase regulator activity"/>
    <property type="evidence" value="ECO:0000318"/>
    <property type="project" value="GO_Central"/>
</dbReference>
<dbReference type="GO" id="GO:0051301">
    <property type="term" value="P:cell division"/>
    <property type="evidence" value="ECO:0007669"/>
    <property type="project" value="UniProtKB-KW"/>
</dbReference>
<dbReference type="GO" id="GO:0000082">
    <property type="term" value="P:G1/S transition of mitotic cell cycle"/>
    <property type="evidence" value="ECO:0000318"/>
    <property type="project" value="GO_Central"/>
</dbReference>
<dbReference type="FunFam" id="1.10.472.10:FF:000220">
    <property type="entry name" value="Cyclin superfamily protein, putative"/>
    <property type="match status" value="1"/>
</dbReference>
<dbReference type="FunFam" id="1.10.472.10:FF:000010">
    <property type="entry name" value="G1/S-specific cyclin Cln1"/>
    <property type="match status" value="1"/>
</dbReference>
<dbReference type="Gene3D" id="1.10.472.10">
    <property type="entry name" value="Cyclin-like"/>
    <property type="match status" value="2"/>
</dbReference>
<dbReference type="InterPro" id="IPR039361">
    <property type="entry name" value="Cyclin"/>
</dbReference>
<dbReference type="InterPro" id="IPR013763">
    <property type="entry name" value="Cyclin-like_dom"/>
</dbReference>
<dbReference type="InterPro" id="IPR036915">
    <property type="entry name" value="Cyclin-like_sf"/>
</dbReference>
<dbReference type="InterPro" id="IPR046965">
    <property type="entry name" value="Cyclin_A/B-like"/>
</dbReference>
<dbReference type="InterPro" id="IPR004367">
    <property type="entry name" value="Cyclin_C-dom"/>
</dbReference>
<dbReference type="InterPro" id="IPR006671">
    <property type="entry name" value="Cyclin_N"/>
</dbReference>
<dbReference type="InterPro" id="IPR048258">
    <property type="entry name" value="Cyclins_cyclin-box"/>
</dbReference>
<dbReference type="PANTHER" id="PTHR10177">
    <property type="entry name" value="CYCLINS"/>
    <property type="match status" value="1"/>
</dbReference>
<dbReference type="Pfam" id="PF02984">
    <property type="entry name" value="Cyclin_C"/>
    <property type="match status" value="1"/>
</dbReference>
<dbReference type="Pfam" id="PF00134">
    <property type="entry name" value="Cyclin_N"/>
    <property type="match status" value="1"/>
</dbReference>
<dbReference type="PIRSF" id="PIRSF001771">
    <property type="entry name" value="Cyclin_A_B_D_E"/>
    <property type="match status" value="1"/>
</dbReference>
<dbReference type="SMART" id="SM00385">
    <property type="entry name" value="CYCLIN"/>
    <property type="match status" value="2"/>
</dbReference>
<dbReference type="SMART" id="SM01332">
    <property type="entry name" value="Cyclin_C"/>
    <property type="match status" value="1"/>
</dbReference>
<dbReference type="SUPFAM" id="SSF47954">
    <property type="entry name" value="Cyclin-like"/>
    <property type="match status" value="2"/>
</dbReference>
<dbReference type="PROSITE" id="PS00292">
    <property type="entry name" value="CYCLINS"/>
    <property type="match status" value="1"/>
</dbReference>
<comment type="similarity">
    <text evidence="2">Belongs to the cyclin family. Cyclin F subfamily.</text>
</comment>
<protein>
    <recommendedName>
        <fullName>Putative cyclin-F3-2</fullName>
        <shortName>CycF3;2</shortName>
    </recommendedName>
</protein>
<evidence type="ECO:0000256" key="1">
    <source>
        <dbReference type="SAM" id="MobiDB-lite"/>
    </source>
</evidence>
<evidence type="ECO:0000305" key="2"/>
<keyword id="KW-0131">Cell cycle</keyword>
<keyword id="KW-0132">Cell division</keyword>
<keyword id="KW-0195">Cyclin</keyword>
<keyword id="KW-1185">Reference proteome</keyword>
<organism>
    <name type="scientific">Oryza sativa subsp. japonica</name>
    <name type="common">Rice</name>
    <dbReference type="NCBI Taxonomy" id="39947"/>
    <lineage>
        <taxon>Eukaryota</taxon>
        <taxon>Viridiplantae</taxon>
        <taxon>Streptophyta</taxon>
        <taxon>Embryophyta</taxon>
        <taxon>Tracheophyta</taxon>
        <taxon>Spermatophyta</taxon>
        <taxon>Magnoliopsida</taxon>
        <taxon>Liliopsida</taxon>
        <taxon>Poales</taxon>
        <taxon>Poaceae</taxon>
        <taxon>BOP clade</taxon>
        <taxon>Oryzoideae</taxon>
        <taxon>Oryzeae</taxon>
        <taxon>Oryzinae</taxon>
        <taxon>Oryza</taxon>
        <taxon>Oryza sativa</taxon>
    </lineage>
</organism>
<gene>
    <name type="primary">CYCF3-2</name>
    <name type="ordered locus">Os03g0208800</name>
    <name type="ordered locus">LOC_Os03g11040</name>
    <name type="ORF">OsJ_009490</name>
</gene>
<reference key="1">
    <citation type="journal article" date="2005" name="Genome Res.">
        <title>Sequence, annotation, and analysis of synteny between rice chromosome 3 and diverged grass species.</title>
        <authorList>
            <consortium name="The rice chromosome 3 sequencing consortium"/>
            <person name="Buell C.R."/>
            <person name="Yuan Q."/>
            <person name="Ouyang S."/>
            <person name="Liu J."/>
            <person name="Zhu W."/>
            <person name="Wang A."/>
            <person name="Maiti R."/>
            <person name="Haas B."/>
            <person name="Wortman J."/>
            <person name="Pertea M."/>
            <person name="Jones K.M."/>
            <person name="Kim M."/>
            <person name="Overton L."/>
            <person name="Tsitrin T."/>
            <person name="Fadrosh D."/>
            <person name="Bera J."/>
            <person name="Weaver B."/>
            <person name="Jin S."/>
            <person name="Johri S."/>
            <person name="Reardon M."/>
            <person name="Webb K."/>
            <person name="Hill J."/>
            <person name="Moffat K."/>
            <person name="Tallon L."/>
            <person name="Van Aken S."/>
            <person name="Lewis M."/>
            <person name="Utterback T."/>
            <person name="Feldblyum T."/>
            <person name="Zismann V."/>
            <person name="Iobst S."/>
            <person name="Hsiao J."/>
            <person name="de Vazeille A.R."/>
            <person name="Salzberg S.L."/>
            <person name="White O."/>
            <person name="Fraser C.M."/>
            <person name="Yu Y."/>
            <person name="Kim H."/>
            <person name="Rambo T."/>
            <person name="Currie J."/>
            <person name="Collura K."/>
            <person name="Kernodle-Thompson S."/>
            <person name="Wei F."/>
            <person name="Kudrna K."/>
            <person name="Ammiraju J.S.S."/>
            <person name="Luo M."/>
            <person name="Goicoechea J.L."/>
            <person name="Wing R.A."/>
            <person name="Henry D."/>
            <person name="Oates R."/>
            <person name="Palmer M."/>
            <person name="Pries G."/>
            <person name="Saski C."/>
            <person name="Simmons J."/>
            <person name="Soderlund C."/>
            <person name="Nelson W."/>
            <person name="de la Bastide M."/>
            <person name="Spiegel L."/>
            <person name="Nascimento L."/>
            <person name="Huang E."/>
            <person name="Preston R."/>
            <person name="Zutavern T."/>
            <person name="Palmer L."/>
            <person name="O'Shaughnessy A."/>
            <person name="Dike S."/>
            <person name="McCombie W.R."/>
            <person name="Minx P."/>
            <person name="Cordum H."/>
            <person name="Wilson R."/>
            <person name="Jin W."/>
            <person name="Lee H.R."/>
            <person name="Jiang J."/>
            <person name="Jackson S."/>
        </authorList>
    </citation>
    <scope>NUCLEOTIDE SEQUENCE [LARGE SCALE GENOMIC DNA]</scope>
    <source>
        <strain>cv. Nipponbare</strain>
    </source>
</reference>
<reference key="2">
    <citation type="journal article" date="2005" name="Nature">
        <title>The map-based sequence of the rice genome.</title>
        <authorList>
            <consortium name="International rice genome sequencing project (IRGSP)"/>
        </authorList>
    </citation>
    <scope>NUCLEOTIDE SEQUENCE [LARGE SCALE GENOMIC DNA]</scope>
    <source>
        <strain>cv. Nipponbare</strain>
    </source>
</reference>
<reference key="3">
    <citation type="journal article" date="2008" name="Nucleic Acids Res.">
        <title>The rice annotation project database (RAP-DB): 2008 update.</title>
        <authorList>
            <consortium name="The rice annotation project (RAP)"/>
        </authorList>
    </citation>
    <scope>GENOME REANNOTATION</scope>
    <source>
        <strain>cv. Nipponbare</strain>
    </source>
</reference>
<reference key="4">
    <citation type="journal article" date="2013" name="Rice">
        <title>Improvement of the Oryza sativa Nipponbare reference genome using next generation sequence and optical map data.</title>
        <authorList>
            <person name="Kawahara Y."/>
            <person name="de la Bastide M."/>
            <person name="Hamilton J.P."/>
            <person name="Kanamori H."/>
            <person name="McCombie W.R."/>
            <person name="Ouyang S."/>
            <person name="Schwartz D.C."/>
            <person name="Tanaka T."/>
            <person name="Wu J."/>
            <person name="Zhou S."/>
            <person name="Childs K.L."/>
            <person name="Davidson R.M."/>
            <person name="Lin H."/>
            <person name="Quesada-Ocampo L."/>
            <person name="Vaillancourt B."/>
            <person name="Sakai H."/>
            <person name="Lee S.S."/>
            <person name="Kim J."/>
            <person name="Numa H."/>
            <person name="Itoh T."/>
            <person name="Buell C.R."/>
            <person name="Matsumoto T."/>
        </authorList>
    </citation>
    <scope>GENOME REANNOTATION</scope>
    <source>
        <strain>cv. Nipponbare</strain>
    </source>
</reference>
<reference key="5">
    <citation type="journal article" date="2005" name="PLoS Biol.">
        <title>The genomes of Oryza sativa: a history of duplications.</title>
        <authorList>
            <person name="Yu J."/>
            <person name="Wang J."/>
            <person name="Lin W."/>
            <person name="Li S."/>
            <person name="Li H."/>
            <person name="Zhou J."/>
            <person name="Ni P."/>
            <person name="Dong W."/>
            <person name="Hu S."/>
            <person name="Zeng C."/>
            <person name="Zhang J."/>
            <person name="Zhang Y."/>
            <person name="Li R."/>
            <person name="Xu Z."/>
            <person name="Li S."/>
            <person name="Li X."/>
            <person name="Zheng H."/>
            <person name="Cong L."/>
            <person name="Lin L."/>
            <person name="Yin J."/>
            <person name="Geng J."/>
            <person name="Li G."/>
            <person name="Shi J."/>
            <person name="Liu J."/>
            <person name="Lv H."/>
            <person name="Li J."/>
            <person name="Wang J."/>
            <person name="Deng Y."/>
            <person name="Ran L."/>
            <person name="Shi X."/>
            <person name="Wang X."/>
            <person name="Wu Q."/>
            <person name="Li C."/>
            <person name="Ren X."/>
            <person name="Wang J."/>
            <person name="Wang X."/>
            <person name="Li D."/>
            <person name="Liu D."/>
            <person name="Zhang X."/>
            <person name="Ji Z."/>
            <person name="Zhao W."/>
            <person name="Sun Y."/>
            <person name="Zhang Z."/>
            <person name="Bao J."/>
            <person name="Han Y."/>
            <person name="Dong L."/>
            <person name="Ji J."/>
            <person name="Chen P."/>
            <person name="Wu S."/>
            <person name="Liu J."/>
            <person name="Xiao Y."/>
            <person name="Bu D."/>
            <person name="Tan J."/>
            <person name="Yang L."/>
            <person name="Ye C."/>
            <person name="Zhang J."/>
            <person name="Xu J."/>
            <person name="Zhou Y."/>
            <person name="Yu Y."/>
            <person name="Zhang B."/>
            <person name="Zhuang S."/>
            <person name="Wei H."/>
            <person name="Liu B."/>
            <person name="Lei M."/>
            <person name="Yu H."/>
            <person name="Li Y."/>
            <person name="Xu H."/>
            <person name="Wei S."/>
            <person name="He X."/>
            <person name="Fang L."/>
            <person name="Zhang Z."/>
            <person name="Zhang Y."/>
            <person name="Huang X."/>
            <person name="Su Z."/>
            <person name="Tong W."/>
            <person name="Li J."/>
            <person name="Tong Z."/>
            <person name="Li S."/>
            <person name="Ye J."/>
            <person name="Wang L."/>
            <person name="Fang L."/>
            <person name="Lei T."/>
            <person name="Chen C.-S."/>
            <person name="Chen H.-C."/>
            <person name="Xu Z."/>
            <person name="Li H."/>
            <person name="Huang H."/>
            <person name="Zhang F."/>
            <person name="Xu H."/>
            <person name="Li N."/>
            <person name="Zhao C."/>
            <person name="Li S."/>
            <person name="Dong L."/>
            <person name="Huang Y."/>
            <person name="Li L."/>
            <person name="Xi Y."/>
            <person name="Qi Q."/>
            <person name="Li W."/>
            <person name="Zhang B."/>
            <person name="Hu W."/>
            <person name="Zhang Y."/>
            <person name="Tian X."/>
            <person name="Jiao Y."/>
            <person name="Liang X."/>
            <person name="Jin J."/>
            <person name="Gao L."/>
            <person name="Zheng W."/>
            <person name="Hao B."/>
            <person name="Liu S.-M."/>
            <person name="Wang W."/>
            <person name="Yuan L."/>
            <person name="Cao M."/>
            <person name="McDermott J."/>
            <person name="Samudrala R."/>
            <person name="Wang J."/>
            <person name="Wong G.K.-S."/>
            <person name="Yang H."/>
        </authorList>
    </citation>
    <scope>NUCLEOTIDE SEQUENCE [LARGE SCALE GENOMIC DNA]</scope>
    <source>
        <strain>cv. Nipponbare</strain>
    </source>
</reference>
<reference key="6">
    <citation type="journal article" date="2006" name="Mol. Genet. Genomics">
        <title>Genome-wide analysis of cyclin family in rice (Oryza sativa L.).</title>
        <authorList>
            <person name="La H."/>
            <person name="Li J."/>
            <person name="Ji Z."/>
            <person name="Cheng Y."/>
            <person name="Li X."/>
            <person name="Jiang S."/>
            <person name="Venkatesh P.N."/>
            <person name="Ramachandran S."/>
        </authorList>
    </citation>
    <scope>GENE FAMILY</scope>
    <scope>NOMENCLATURE</scope>
</reference>
<feature type="chain" id="PRO_0000287048" description="Putative cyclin-F3-2">
    <location>
        <begin position="1"/>
        <end position="406"/>
    </location>
</feature>
<feature type="region of interest" description="Disordered" evidence="1">
    <location>
        <begin position="1"/>
        <end position="107"/>
    </location>
</feature>
<feature type="compositionally biased region" description="Low complexity" evidence="1">
    <location>
        <begin position="11"/>
        <end position="21"/>
    </location>
</feature>
<feature type="compositionally biased region" description="Low complexity" evidence="1">
    <location>
        <begin position="29"/>
        <end position="57"/>
    </location>
</feature>